<gene>
    <name type="ORF">AGAP011801</name>
</gene>
<organism>
    <name type="scientific">Anopheles gambiae</name>
    <name type="common">African malaria mosquito</name>
    <dbReference type="NCBI Taxonomy" id="7165"/>
    <lineage>
        <taxon>Eukaryota</taxon>
        <taxon>Metazoa</taxon>
        <taxon>Ecdysozoa</taxon>
        <taxon>Arthropoda</taxon>
        <taxon>Hexapoda</taxon>
        <taxon>Insecta</taxon>
        <taxon>Pterygota</taxon>
        <taxon>Neoptera</taxon>
        <taxon>Endopterygota</taxon>
        <taxon>Diptera</taxon>
        <taxon>Nematocera</taxon>
        <taxon>Culicoidea</taxon>
        <taxon>Culicidae</taxon>
        <taxon>Anophelinae</taxon>
        <taxon>Anopheles</taxon>
    </lineage>
</organism>
<comment type="similarity">
    <text evidence="1">Belongs to the CCDC22 family.</text>
</comment>
<dbReference type="EMBL" id="AAAB01008986">
    <property type="protein sequence ID" value="EAA00392.4"/>
    <property type="molecule type" value="Genomic_DNA"/>
</dbReference>
<dbReference type="RefSeq" id="XP_320714.4">
    <property type="nucleotide sequence ID" value="XM_320714.4"/>
</dbReference>
<dbReference type="SMR" id="Q7PZ96"/>
<dbReference type="FunCoup" id="Q7PZ96">
    <property type="interactions" value="1685"/>
</dbReference>
<dbReference type="STRING" id="7165.Q7PZ96"/>
<dbReference type="PaxDb" id="7165-AGAP011801-PA"/>
<dbReference type="VEuPathDB" id="VectorBase:AGAMI1_014350"/>
<dbReference type="VEuPathDB" id="VectorBase:AGAP011801"/>
<dbReference type="eggNOG" id="KOG1937">
    <property type="taxonomic scope" value="Eukaryota"/>
</dbReference>
<dbReference type="HOGENOM" id="CLU_024231_1_0_1"/>
<dbReference type="InParanoid" id="Q7PZ96"/>
<dbReference type="OMA" id="KFEQHIQ"/>
<dbReference type="PhylomeDB" id="Q7PZ96"/>
<dbReference type="Proteomes" id="UP000007062">
    <property type="component" value="Chromosome 3L"/>
</dbReference>
<dbReference type="GO" id="GO:0097602">
    <property type="term" value="F:cullin family protein binding"/>
    <property type="evidence" value="ECO:0000318"/>
    <property type="project" value="GO_Central"/>
</dbReference>
<dbReference type="GO" id="GO:2000060">
    <property type="term" value="P:positive regulation of ubiquitin-dependent protein catabolic process"/>
    <property type="evidence" value="ECO:0000318"/>
    <property type="project" value="GO_Central"/>
</dbReference>
<dbReference type="InterPro" id="IPR008530">
    <property type="entry name" value="CCDC22"/>
</dbReference>
<dbReference type="InterPro" id="IPR048348">
    <property type="entry name" value="CCDC22_CC"/>
</dbReference>
<dbReference type="InterPro" id="IPR048349">
    <property type="entry name" value="CCDC22_N"/>
</dbReference>
<dbReference type="PANTHER" id="PTHR15668:SF4">
    <property type="entry name" value="COILED-COIL DOMAIN-CONTAINING PROTEIN 22"/>
    <property type="match status" value="1"/>
</dbReference>
<dbReference type="PANTHER" id="PTHR15668">
    <property type="entry name" value="JM1 PROTEIN"/>
    <property type="match status" value="1"/>
</dbReference>
<dbReference type="Pfam" id="PF05667">
    <property type="entry name" value="CCDC22_CC"/>
    <property type="match status" value="1"/>
</dbReference>
<dbReference type="Pfam" id="PF21674">
    <property type="entry name" value="CCDC22_N"/>
    <property type="match status" value="1"/>
</dbReference>
<proteinExistence type="inferred from homology"/>
<keyword id="KW-0175">Coiled coil</keyword>
<keyword id="KW-1185">Reference proteome</keyword>
<accession>Q7PZ96</accession>
<protein>
    <recommendedName>
        <fullName>Coiled-coil domain-containing protein 22 homolog</fullName>
    </recommendedName>
</protein>
<name>CCD22_ANOGA</name>
<feature type="chain" id="PRO_0000347256" description="Coiled-coil domain-containing protein 22 homolog">
    <location>
        <begin position="1"/>
        <end position="557"/>
    </location>
</feature>
<feature type="coiled-coil region" evidence="1">
    <location>
        <begin position="260"/>
        <end position="350"/>
    </location>
</feature>
<feature type="coiled-coil region" evidence="1">
    <location>
        <begin position="489"/>
        <end position="554"/>
    </location>
</feature>
<evidence type="ECO:0000255" key="1"/>
<reference key="1">
    <citation type="journal article" date="2002" name="Science">
        <title>The genome sequence of the malaria mosquito Anopheles gambiae.</title>
        <authorList>
            <person name="Holt R.A."/>
            <person name="Subramanian G.M."/>
            <person name="Halpern A."/>
            <person name="Sutton G.G."/>
            <person name="Charlab R."/>
            <person name="Nusskern D.R."/>
            <person name="Wincker P."/>
            <person name="Clark A.G."/>
            <person name="Ribeiro J.M.C."/>
            <person name="Wides R."/>
            <person name="Salzberg S.L."/>
            <person name="Loftus B.J."/>
            <person name="Yandell M.D."/>
            <person name="Majoros W.H."/>
            <person name="Rusch D.B."/>
            <person name="Lai Z."/>
            <person name="Kraft C.L."/>
            <person name="Abril J.F."/>
            <person name="Anthouard V."/>
            <person name="Arensburger P."/>
            <person name="Atkinson P.W."/>
            <person name="Baden H."/>
            <person name="de Berardinis V."/>
            <person name="Baldwin D."/>
            <person name="Benes V."/>
            <person name="Biedler J."/>
            <person name="Blass C."/>
            <person name="Bolanos R."/>
            <person name="Boscus D."/>
            <person name="Barnstead M."/>
            <person name="Cai S."/>
            <person name="Center A."/>
            <person name="Chaturverdi K."/>
            <person name="Christophides G.K."/>
            <person name="Chrystal M.A.M."/>
            <person name="Clamp M."/>
            <person name="Cravchik A."/>
            <person name="Curwen V."/>
            <person name="Dana A."/>
            <person name="Delcher A."/>
            <person name="Dew I."/>
            <person name="Evans C.A."/>
            <person name="Flanigan M."/>
            <person name="Grundschober-Freimoser A."/>
            <person name="Friedli L."/>
            <person name="Gu Z."/>
            <person name="Guan P."/>
            <person name="Guigo R."/>
            <person name="Hillenmeyer M.E."/>
            <person name="Hladun S.L."/>
            <person name="Hogan J.R."/>
            <person name="Hong Y.S."/>
            <person name="Hoover J."/>
            <person name="Jaillon O."/>
            <person name="Ke Z."/>
            <person name="Kodira C.D."/>
            <person name="Kokoza E."/>
            <person name="Koutsos A."/>
            <person name="Letunic I."/>
            <person name="Levitsky A.A."/>
            <person name="Liang Y."/>
            <person name="Lin J.-J."/>
            <person name="Lobo N.F."/>
            <person name="Lopez J.R."/>
            <person name="Malek J.A."/>
            <person name="McIntosh T.C."/>
            <person name="Meister S."/>
            <person name="Miller J.R."/>
            <person name="Mobarry C."/>
            <person name="Mongin E."/>
            <person name="Murphy S.D."/>
            <person name="O'Brochta D.A."/>
            <person name="Pfannkoch C."/>
            <person name="Qi R."/>
            <person name="Regier M.A."/>
            <person name="Remington K."/>
            <person name="Shao H."/>
            <person name="Sharakhova M.V."/>
            <person name="Sitter C.D."/>
            <person name="Shetty J."/>
            <person name="Smith T.J."/>
            <person name="Strong R."/>
            <person name="Sun J."/>
            <person name="Thomasova D."/>
            <person name="Ton L.Q."/>
            <person name="Topalis P."/>
            <person name="Tu Z.J."/>
            <person name="Unger M.F."/>
            <person name="Walenz B."/>
            <person name="Wang A.H."/>
            <person name="Wang J."/>
            <person name="Wang M."/>
            <person name="Wang X."/>
            <person name="Woodford K.J."/>
            <person name="Wortman J.R."/>
            <person name="Wu M."/>
            <person name="Yao A."/>
            <person name="Zdobnov E.M."/>
            <person name="Zhang H."/>
            <person name="Zhao Q."/>
            <person name="Zhao S."/>
            <person name="Zhu S.C."/>
            <person name="Zhimulev I."/>
            <person name="Coluzzi M."/>
            <person name="della Torre A."/>
            <person name="Roth C.W."/>
            <person name="Louis C."/>
            <person name="Kalush F."/>
            <person name="Mural R.J."/>
            <person name="Myers E.W."/>
            <person name="Adams M.D."/>
            <person name="Smith H.O."/>
            <person name="Broder S."/>
            <person name="Gardner M.J."/>
            <person name="Fraser C.M."/>
            <person name="Birney E."/>
            <person name="Bork P."/>
            <person name="Brey P.T."/>
            <person name="Venter J.C."/>
            <person name="Weissenbach J."/>
            <person name="Kafatos F.C."/>
            <person name="Collins F.H."/>
            <person name="Hoffman S.L."/>
        </authorList>
    </citation>
    <scope>NUCLEOTIDE SEQUENCE [LARGE SCALE GENOMIC DNA]</scope>
    <source>
        <strain>PEST</strain>
    </source>
</reference>
<sequence length="557" mass="63120">MDDIDNIILHSLRQIDCDLDEDLQGLEQFTPAVLVRTVSKCLLLIDPSLDLPQTLPPGMAQRFTVTARLAEACTAVGYRRDIGYQTFLYSNVAEVRRVFMFLIEQLPKDSTDAADPEAPLDRVTDLENRILDSMRQQLRGRKDPATPLDLRNATLGWAGSRSRANIPFVTQSDVTAGTGLRGRKWLQTILICVFFLALAQKLSNTGYAGAGFGRRKRMKWIGGRQTTDDSILKLQAYYAQNKAQCPLAEELEEAAETPDRLGQLDALEQEIAAIETAISESRRQRRELHAKRRTVAESAQAVESVAEKLKEEKKIKERTHILLENPEVNVAKLESIIAAAGEKMKKLQSQWEAHRAPLVATLEEHQAKNSDQIESARHKSEEVIVDLQTKSALHARLVQEYERMGRTVSRTAYTSRILEIIGNIRKQKTDIDKILHDTRSLQKEINSITGQLDRQFTVTDDLIFRNAKRDEYCKRAYILLVALHTECSELTALVQETGTVKREVRELEDQIENEKDRNVVTNLAQIGQDLEEMQRESRRLEEAIQQLELSAGRNGTK</sequence>